<feature type="chain" id="PRO_0000444655" description="FAD-dependent monooxygenase BOA8">
    <location>
        <begin position="1"/>
        <end position="779"/>
    </location>
</feature>
<feature type="transmembrane region" description="Helical" evidence="2">
    <location>
        <begin position="471"/>
        <end position="491"/>
    </location>
</feature>
<feature type="transmembrane region" description="Helical" evidence="2">
    <location>
        <begin position="504"/>
        <end position="524"/>
    </location>
</feature>
<feature type="transmembrane region" description="Helical" evidence="2">
    <location>
        <begin position="542"/>
        <end position="562"/>
    </location>
</feature>
<feature type="transmembrane region" description="Helical" evidence="2">
    <location>
        <begin position="587"/>
        <end position="607"/>
    </location>
</feature>
<feature type="transmembrane region" description="Helical" evidence="2">
    <location>
        <begin position="618"/>
        <end position="638"/>
    </location>
</feature>
<feature type="transmembrane region" description="Helical" evidence="2">
    <location>
        <begin position="665"/>
        <end position="685"/>
    </location>
</feature>
<feature type="transmembrane region" description="Helical" evidence="2">
    <location>
        <begin position="742"/>
        <end position="762"/>
    </location>
</feature>
<feature type="binding site" evidence="1">
    <location>
        <position position="85"/>
    </location>
    <ligand>
        <name>FAD</name>
        <dbReference type="ChEBI" id="CHEBI:57692"/>
    </ligand>
</feature>
<feature type="binding site" evidence="1">
    <location>
        <position position="128"/>
    </location>
    <ligand>
        <name>FAD</name>
        <dbReference type="ChEBI" id="CHEBI:57692"/>
    </ligand>
</feature>
<feature type="binding site" evidence="1">
    <location>
        <position position="331"/>
    </location>
    <ligand>
        <name>FAD</name>
        <dbReference type="ChEBI" id="CHEBI:57692"/>
    </ligand>
</feature>
<feature type="binding site" evidence="1">
    <location>
        <position position="344"/>
    </location>
    <ligand>
        <name>FAD</name>
        <dbReference type="ChEBI" id="CHEBI:57692"/>
    </ligand>
</feature>
<protein>
    <recommendedName>
        <fullName evidence="5">FAD-dependent monooxygenase BOA8</fullName>
        <ecNumber evidence="7">1.-.-.-</ecNumber>
    </recommendedName>
    <alternativeName>
        <fullName evidence="5">Botcinic acid biosynthesis cluster B protein 8</fullName>
    </alternativeName>
</protein>
<accession>G0LET6</accession>
<reference key="1">
    <citation type="journal article" date="2011" name="Mol. Plant Pathol.">
        <title>The Botrytis cinerea phytotoxin botcinic acid requires two polyketide synthases for production and has a redundant role in virulence with botrydial.</title>
        <authorList>
            <person name="Dalmais B."/>
            <person name="Schumacher J."/>
            <person name="Moraga J."/>
            <person name="Le Pecheur P."/>
            <person name="Tudzynski B."/>
            <person name="Collado I.G."/>
            <person name="Viaud M."/>
        </authorList>
    </citation>
    <scope>NUCLEOTIDE SEQUENCE [GENOMIC DNA]</scope>
    <scope>FUNCTION</scope>
    <scope>INDUCTION</scope>
    <scope>PATHWAY</scope>
    <source>
        <strain>B05.10</strain>
    </source>
</reference>
<reference key="2">
    <citation type="journal article" date="2013" name="ChemBioChem">
        <title>A shared biosynthetic pathway for botcinins and botrylactones revealed through gene deletions.</title>
        <authorList>
            <person name="Massaroli M."/>
            <person name="Moraga J."/>
            <person name="Bastos Borges K."/>
            <person name="Ramirez-Fernandez J."/>
            <person name="Viaud M."/>
            <person name="Gonzalez Collado I."/>
            <person name="Duran-Patron R."/>
            <person name="Hernandez-Galan R."/>
        </authorList>
    </citation>
    <scope>FUNCTION</scope>
</reference>
<keyword id="KW-0274">FAD</keyword>
<keyword id="KW-0285">Flavoprotein</keyword>
<keyword id="KW-0472">Membrane</keyword>
<keyword id="KW-0503">Monooxygenase</keyword>
<keyword id="KW-0560">Oxidoreductase</keyword>
<keyword id="KW-0812">Transmembrane</keyword>
<keyword id="KW-1133">Transmembrane helix</keyword>
<keyword id="KW-0843">Virulence</keyword>
<comment type="function">
    <text evidence="3 4 8">FAD-dependent monooxygenase; part of the gene cluster B that mediates the biosynthesis of botcinic acid and its botcinin derivatives, acetate-derived polyketides that contribute to virulence when combined with the sesquiterpene botrydial (PubMed:21722295). Botcinic acid and its derivatives have been shown to induce chlorosis and necrosis during host plant infection, but also have antifungal activities (PubMed:21722295). Two polyketide synthases, BOA6 and BOA9, are involved in the biosynthesis of botcinins. BOA6 mediates the formation of the per-methylated tetraketide core by condensation of four units of malonyl-CoA with one unit of acetyl-CoA, which would be methylated in activated methylene groups to yield a bicyclic acid intermediate that could then either be converted to botrylactone derivatives or lose the starter acetate unit through a retro-Claisen type C-C bond cleavage to yield botcinin derivatives (PubMed:23203902). The second polyketide synthase, BOA9, is probably required for the biosynthesis of the tetraketide side chain of botcinins (Probable). The methyltransferase (MT) domain within BOA6 is probably responsible for the incorporation of four methyl groups (Probable). The trans-enoyl reductase BOA5 might take over the enoyl reductase function of BOA6 that misses an ER domain (Probable). The monooxygenases BOA2, BOA3 and BOA4 might be involved in further hydroxylations at C4, C5 and C8, whereas BOA7, close to BOA9, could potentially be involved in the hydroxylation at C4 in the side chain of botcinins (Probable).</text>
</comment>
<comment type="cofactor">
    <cofactor evidence="6">
        <name>FAD</name>
        <dbReference type="ChEBI" id="CHEBI:57692"/>
    </cofactor>
</comment>
<comment type="pathway">
    <text evidence="7">Polyketide biosynthesis.</text>
</comment>
<comment type="subcellular location">
    <subcellularLocation>
        <location evidence="2">Membrane</location>
        <topology evidence="2">Multi-pass membrane protein</topology>
    </subcellularLocation>
</comment>
<comment type="induction">
    <text evidence="3">Expression of the botcinic acid clusters genes BOA1-13 and BOA17 is coregulated by BCG1 during both in vitro and in planta growth.</text>
</comment>
<comment type="similarity">
    <text evidence="6">Belongs to the paxM FAD-dependent monooxygenase family.</text>
</comment>
<dbReference type="EC" id="1.-.-.-" evidence="7"/>
<dbReference type="EMBL" id="FR718877">
    <property type="protein sequence ID" value="CBX87031.1"/>
    <property type="molecule type" value="Genomic_DNA"/>
</dbReference>
<dbReference type="GO" id="GO:0016020">
    <property type="term" value="C:membrane"/>
    <property type="evidence" value="ECO:0007669"/>
    <property type="project" value="UniProtKB-SubCell"/>
</dbReference>
<dbReference type="GO" id="GO:0071949">
    <property type="term" value="F:FAD binding"/>
    <property type="evidence" value="ECO:0007669"/>
    <property type="project" value="InterPro"/>
</dbReference>
<dbReference type="GO" id="GO:0004497">
    <property type="term" value="F:monooxygenase activity"/>
    <property type="evidence" value="ECO:0007669"/>
    <property type="project" value="UniProtKB-KW"/>
</dbReference>
<dbReference type="Gene3D" id="3.50.50.60">
    <property type="entry name" value="FAD/NAD(P)-binding domain"/>
    <property type="match status" value="1"/>
</dbReference>
<dbReference type="InterPro" id="IPR002938">
    <property type="entry name" value="FAD-bd"/>
</dbReference>
<dbReference type="InterPro" id="IPR036188">
    <property type="entry name" value="FAD/NAD-bd_sf"/>
</dbReference>
<dbReference type="InterPro" id="IPR050562">
    <property type="entry name" value="FAD_mOase_fung"/>
</dbReference>
<dbReference type="PANTHER" id="PTHR47356:SF2">
    <property type="entry name" value="FAD-BINDING DOMAIN-CONTAINING PROTEIN-RELATED"/>
    <property type="match status" value="1"/>
</dbReference>
<dbReference type="PANTHER" id="PTHR47356">
    <property type="entry name" value="FAD-DEPENDENT MONOOXYGENASE ASQG-RELATED"/>
    <property type="match status" value="1"/>
</dbReference>
<dbReference type="Pfam" id="PF01494">
    <property type="entry name" value="FAD_binding_3"/>
    <property type="match status" value="2"/>
</dbReference>
<dbReference type="PRINTS" id="PR00420">
    <property type="entry name" value="RNGMNOXGNASE"/>
</dbReference>
<dbReference type="SUPFAM" id="SSF51905">
    <property type="entry name" value="FAD/NAD(P)-binding domain"/>
    <property type="match status" value="1"/>
</dbReference>
<organism>
    <name type="scientific">Botryotinia fuckeliana (strain B05.10)</name>
    <name type="common">Noble rot fungus</name>
    <name type="synonym">Botrytis cinerea</name>
    <dbReference type="NCBI Taxonomy" id="332648"/>
    <lineage>
        <taxon>Eukaryota</taxon>
        <taxon>Fungi</taxon>
        <taxon>Dikarya</taxon>
        <taxon>Ascomycota</taxon>
        <taxon>Pezizomycotina</taxon>
        <taxon>Leotiomycetes</taxon>
        <taxon>Helotiales</taxon>
        <taxon>Sclerotiniaceae</taxon>
        <taxon>Botrytis</taxon>
    </lineage>
</organism>
<gene>
    <name evidence="5" type="primary">BOA8</name>
</gene>
<evidence type="ECO:0000250" key="1">
    <source>
        <dbReference type="UniProtKB" id="B8M9J8"/>
    </source>
</evidence>
<evidence type="ECO:0000255" key="2"/>
<evidence type="ECO:0000269" key="3">
    <source>
    </source>
</evidence>
<evidence type="ECO:0000269" key="4">
    <source>
    </source>
</evidence>
<evidence type="ECO:0000303" key="5">
    <source>
    </source>
</evidence>
<evidence type="ECO:0000305" key="6"/>
<evidence type="ECO:0000305" key="7">
    <source>
    </source>
</evidence>
<evidence type="ECO:0000305" key="8">
    <source>
    </source>
</evidence>
<proteinExistence type="evidence at transcript level"/>
<sequence>MFNSTMDIDPHLRVRERMNQRKQSRSIYHSINDKKKTISRPNPSINIAIMTQTSQMKVVIVGGSIAGLTLAHCLSRYGIDYIILERRHDIAPQVGASTWDENGRLLSETDAPILTGKRLGYTITFLERETLLEILYRHLPDKSKVLTGKYVRSIEQDSKEAVVICEDGSRYSGDVIAGADGIHSTIRSEMRRQIAKEGTTKDLEALKRDEIALSAEYSCLFGISKPIPGLEIGHTHRSSGKGASTLLFGGVDGKLYWFLFTKNEERTFGDGIPRYKKGDETNHVAKYMHHHVSGNILLSEVWKNRIVANFVTIEEMENEHWNWNRVACLGDSIHKMTPNLGQGANCAIESAAEMANSLAKALRDDGSKPAIEDINSALSLYHQKRNVRANLIVKAANKFTRVEALATTGDWVASMFIIPRLGDILADRGAKVQVGATKLDCLPMPKRALEGTMPWSTNSGIGKEENRKRRAQLALPLILIALWFFWKKTPEPKGFPVTKTFSEVKLDMLSSIANAIPFATIWTIESYRRGNALTVANIFPTAFLLLAQKLGIELVAPIYFFFHYVQSPQENFAALDNRLTNIAFAKILPLAILSIFLGPSYCIWSSIELESAQWIYDNAWYWYPVYLTMFLRILKFIVKDTTRLNRIYKPTADLSYLRISYSISILICAAFYLYGSLSSSTSIAFLTQELQPPIQPIQAILGAFSELWAAKQTSLYGAAFYWTFLHFADLKFVGKSKQSWLLILTIXLSSTFLAGPGVGLIVMWAWREEIMAKKHVVPE</sequence>
<name>BOA8_BOTFB</name>